<evidence type="ECO:0000255" key="1">
    <source>
        <dbReference type="HAMAP-Rule" id="MF_00382"/>
    </source>
</evidence>
<evidence type="ECO:0000305" key="2"/>
<keyword id="KW-1185">Reference proteome</keyword>
<keyword id="KW-0687">Ribonucleoprotein</keyword>
<keyword id="KW-0689">Ribosomal protein</keyword>
<keyword id="KW-0694">RNA-binding</keyword>
<keyword id="KW-0699">rRNA-binding</keyword>
<accession>Q39VS6</accession>
<feature type="chain" id="PRO_0000243685" description="Large ribosomal subunit protein bL20">
    <location>
        <begin position="1"/>
        <end position="117"/>
    </location>
</feature>
<reference key="1">
    <citation type="journal article" date="2009" name="BMC Microbiol.">
        <title>The genome sequence of Geobacter metallireducens: features of metabolism, physiology and regulation common and dissimilar to Geobacter sulfurreducens.</title>
        <authorList>
            <person name="Aklujkar M."/>
            <person name="Krushkal J."/>
            <person name="DiBartolo G."/>
            <person name="Lapidus A."/>
            <person name="Land M.L."/>
            <person name="Lovley D.R."/>
        </authorList>
    </citation>
    <scope>NUCLEOTIDE SEQUENCE [LARGE SCALE GENOMIC DNA]</scope>
    <source>
        <strain>ATCC 53774 / DSM 7210 / GS-15</strain>
    </source>
</reference>
<gene>
    <name evidence="1" type="primary">rplT</name>
    <name type="ordered locus">Gmet_1414</name>
</gene>
<protein>
    <recommendedName>
        <fullName evidence="1">Large ribosomal subunit protein bL20</fullName>
    </recommendedName>
    <alternativeName>
        <fullName evidence="2">50S ribosomal protein L20</fullName>
    </alternativeName>
</protein>
<organism>
    <name type="scientific">Geobacter metallireducens (strain ATCC 53774 / DSM 7210 / GS-15)</name>
    <dbReference type="NCBI Taxonomy" id="269799"/>
    <lineage>
        <taxon>Bacteria</taxon>
        <taxon>Pseudomonadati</taxon>
        <taxon>Thermodesulfobacteriota</taxon>
        <taxon>Desulfuromonadia</taxon>
        <taxon>Geobacterales</taxon>
        <taxon>Geobacteraceae</taxon>
        <taxon>Geobacter</taxon>
    </lineage>
</organism>
<name>RL20_GEOMG</name>
<sequence>MPRVKRGFKARRRRNKVLKLAKGYRGARSKLFRSATEAVDRALNYAFRDRKVKKRDFRALWITRINAASRLNGLSYSKLIHGLKKASVEIDRKVLADLAVSDPQGFSEIASVAKTQI</sequence>
<proteinExistence type="inferred from homology"/>
<comment type="function">
    <text evidence="1">Binds directly to 23S ribosomal RNA and is necessary for the in vitro assembly process of the 50S ribosomal subunit. It is not involved in the protein synthesizing functions of that subunit.</text>
</comment>
<comment type="similarity">
    <text evidence="1">Belongs to the bacterial ribosomal protein bL20 family.</text>
</comment>
<dbReference type="EMBL" id="CP000148">
    <property type="protein sequence ID" value="ABB31648.1"/>
    <property type="molecule type" value="Genomic_DNA"/>
</dbReference>
<dbReference type="RefSeq" id="WP_004511653.1">
    <property type="nucleotide sequence ID" value="NC_007517.1"/>
</dbReference>
<dbReference type="SMR" id="Q39VS6"/>
<dbReference type="STRING" id="269799.Gmet_1414"/>
<dbReference type="KEGG" id="gme:Gmet_1414"/>
<dbReference type="eggNOG" id="COG0292">
    <property type="taxonomic scope" value="Bacteria"/>
</dbReference>
<dbReference type="HOGENOM" id="CLU_123265_0_1_7"/>
<dbReference type="Proteomes" id="UP000007073">
    <property type="component" value="Chromosome"/>
</dbReference>
<dbReference type="GO" id="GO:1990904">
    <property type="term" value="C:ribonucleoprotein complex"/>
    <property type="evidence" value="ECO:0007669"/>
    <property type="project" value="UniProtKB-KW"/>
</dbReference>
<dbReference type="GO" id="GO:0005840">
    <property type="term" value="C:ribosome"/>
    <property type="evidence" value="ECO:0007669"/>
    <property type="project" value="UniProtKB-KW"/>
</dbReference>
<dbReference type="GO" id="GO:0019843">
    <property type="term" value="F:rRNA binding"/>
    <property type="evidence" value="ECO:0007669"/>
    <property type="project" value="UniProtKB-UniRule"/>
</dbReference>
<dbReference type="GO" id="GO:0003735">
    <property type="term" value="F:structural constituent of ribosome"/>
    <property type="evidence" value="ECO:0007669"/>
    <property type="project" value="InterPro"/>
</dbReference>
<dbReference type="GO" id="GO:0000027">
    <property type="term" value="P:ribosomal large subunit assembly"/>
    <property type="evidence" value="ECO:0007669"/>
    <property type="project" value="UniProtKB-UniRule"/>
</dbReference>
<dbReference type="GO" id="GO:0006412">
    <property type="term" value="P:translation"/>
    <property type="evidence" value="ECO:0007669"/>
    <property type="project" value="InterPro"/>
</dbReference>
<dbReference type="CDD" id="cd07026">
    <property type="entry name" value="Ribosomal_L20"/>
    <property type="match status" value="1"/>
</dbReference>
<dbReference type="FunFam" id="1.10.1900.20:FF:000001">
    <property type="entry name" value="50S ribosomal protein L20"/>
    <property type="match status" value="1"/>
</dbReference>
<dbReference type="Gene3D" id="6.10.160.10">
    <property type="match status" value="1"/>
</dbReference>
<dbReference type="Gene3D" id="1.10.1900.20">
    <property type="entry name" value="Ribosomal protein L20"/>
    <property type="match status" value="1"/>
</dbReference>
<dbReference type="HAMAP" id="MF_00382">
    <property type="entry name" value="Ribosomal_bL20"/>
    <property type="match status" value="1"/>
</dbReference>
<dbReference type="InterPro" id="IPR005813">
    <property type="entry name" value="Ribosomal_bL20"/>
</dbReference>
<dbReference type="InterPro" id="IPR049946">
    <property type="entry name" value="RIBOSOMAL_L20_CS"/>
</dbReference>
<dbReference type="InterPro" id="IPR035566">
    <property type="entry name" value="Ribosomal_protein_bL20_C"/>
</dbReference>
<dbReference type="NCBIfam" id="TIGR01032">
    <property type="entry name" value="rplT_bact"/>
    <property type="match status" value="1"/>
</dbReference>
<dbReference type="PANTHER" id="PTHR10986">
    <property type="entry name" value="39S RIBOSOMAL PROTEIN L20"/>
    <property type="match status" value="1"/>
</dbReference>
<dbReference type="Pfam" id="PF00453">
    <property type="entry name" value="Ribosomal_L20"/>
    <property type="match status" value="1"/>
</dbReference>
<dbReference type="PRINTS" id="PR00062">
    <property type="entry name" value="RIBOSOMALL20"/>
</dbReference>
<dbReference type="SUPFAM" id="SSF74731">
    <property type="entry name" value="Ribosomal protein L20"/>
    <property type="match status" value="1"/>
</dbReference>
<dbReference type="PROSITE" id="PS00937">
    <property type="entry name" value="RIBOSOMAL_L20"/>
    <property type="match status" value="1"/>
</dbReference>